<evidence type="ECO:0000250" key="1"/>
<evidence type="ECO:0000250" key="2">
    <source>
        <dbReference type="UniProtKB" id="Q06338"/>
    </source>
</evidence>
<evidence type="ECO:0000256" key="3">
    <source>
        <dbReference type="SAM" id="MobiDB-lite"/>
    </source>
</evidence>
<evidence type="ECO:0000305" key="4"/>
<feature type="chain" id="PRO_0000249706" description="Protein BCP1">
    <location>
        <begin position="1"/>
        <end position="335"/>
    </location>
</feature>
<feature type="region of interest" description="Disordered" evidence="3">
    <location>
        <begin position="1"/>
        <end position="32"/>
    </location>
</feature>
<feature type="region of interest" description="Disordered" evidence="3">
    <location>
        <begin position="210"/>
        <end position="259"/>
    </location>
</feature>
<feature type="compositionally biased region" description="Basic and acidic residues" evidence="3">
    <location>
        <begin position="1"/>
        <end position="13"/>
    </location>
</feature>
<feature type="compositionally biased region" description="Acidic residues" evidence="3">
    <location>
        <begin position="19"/>
        <end position="30"/>
    </location>
</feature>
<feature type="compositionally biased region" description="Acidic residues" evidence="3">
    <location>
        <begin position="210"/>
        <end position="223"/>
    </location>
</feature>
<feature type="compositionally biased region" description="Basic and acidic residues" evidence="3">
    <location>
        <begin position="237"/>
        <end position="252"/>
    </location>
</feature>
<organism>
    <name type="scientific">Mycosarcoma maydis</name>
    <name type="common">Corn smut fungus</name>
    <name type="synonym">Ustilago maydis</name>
    <dbReference type="NCBI Taxonomy" id="5270"/>
    <lineage>
        <taxon>Eukaryota</taxon>
        <taxon>Fungi</taxon>
        <taxon>Dikarya</taxon>
        <taxon>Basidiomycota</taxon>
        <taxon>Ustilaginomycotina</taxon>
        <taxon>Ustilaginomycetes</taxon>
        <taxon>Ustilaginales</taxon>
        <taxon>Ustilaginaceae</taxon>
        <taxon>Mycosarcoma</taxon>
    </lineage>
</organism>
<gene>
    <name type="primary">BCP1</name>
    <name type="ORF">UMAG_03018</name>
</gene>
<dbReference type="EMBL" id="CM003146">
    <property type="protein sequence ID" value="KIS69039.1"/>
    <property type="molecule type" value="Genomic_DNA"/>
</dbReference>
<dbReference type="RefSeq" id="XP_011389398.1">
    <property type="nucleotide sequence ID" value="XM_011391096.1"/>
</dbReference>
<dbReference type="SMR" id="Q4PA45"/>
<dbReference type="FunCoup" id="Q4PA45">
    <property type="interactions" value="671"/>
</dbReference>
<dbReference type="STRING" id="237631.Q4PA45"/>
<dbReference type="EnsemblFungi" id="KIS69039">
    <property type="protein sequence ID" value="KIS69039"/>
    <property type="gene ID" value="UMAG_03018"/>
</dbReference>
<dbReference type="GeneID" id="23563608"/>
<dbReference type="KEGG" id="uma:UMAG_03018"/>
<dbReference type="VEuPathDB" id="FungiDB:UMAG_03018"/>
<dbReference type="eggNOG" id="KOG3034">
    <property type="taxonomic scope" value="Eukaryota"/>
</dbReference>
<dbReference type="HOGENOM" id="CLU_068770_2_0_1"/>
<dbReference type="InParanoid" id="Q4PA45"/>
<dbReference type="OMA" id="LHERMVN"/>
<dbReference type="OrthoDB" id="27543at2759"/>
<dbReference type="Proteomes" id="UP000000561">
    <property type="component" value="Chromosome 7"/>
</dbReference>
<dbReference type="GO" id="GO:0005737">
    <property type="term" value="C:cytoplasm"/>
    <property type="evidence" value="ECO:0007669"/>
    <property type="project" value="UniProtKB-SubCell"/>
</dbReference>
<dbReference type="GO" id="GO:0005634">
    <property type="term" value="C:nucleus"/>
    <property type="evidence" value="ECO:0000318"/>
    <property type="project" value="GO_Central"/>
</dbReference>
<dbReference type="GO" id="GO:0015031">
    <property type="term" value="P:protein transport"/>
    <property type="evidence" value="ECO:0007669"/>
    <property type="project" value="UniProtKB-KW"/>
</dbReference>
<dbReference type="InterPro" id="IPR025602">
    <property type="entry name" value="BCP1_family"/>
</dbReference>
<dbReference type="PANTHER" id="PTHR13261">
    <property type="entry name" value="BRCA2 AND CDKN1A INTERACTING PROTEIN"/>
    <property type="match status" value="1"/>
</dbReference>
<dbReference type="PANTHER" id="PTHR13261:SF0">
    <property type="entry name" value="BRCA2 AND CDKN1A-INTERACTING PROTEIN"/>
    <property type="match status" value="1"/>
</dbReference>
<dbReference type="Pfam" id="PF13862">
    <property type="entry name" value="BCCIP"/>
    <property type="match status" value="1"/>
</dbReference>
<dbReference type="PIRSF" id="PIRSF028983">
    <property type="entry name" value="BCP1"/>
    <property type="match status" value="1"/>
</dbReference>
<proteinExistence type="inferred from homology"/>
<name>BCP1_MYCMD</name>
<reference key="1">
    <citation type="journal article" date="2006" name="Nature">
        <title>Insights from the genome of the biotrophic fungal plant pathogen Ustilago maydis.</title>
        <authorList>
            <person name="Kaemper J."/>
            <person name="Kahmann R."/>
            <person name="Boelker M."/>
            <person name="Ma L.-J."/>
            <person name="Brefort T."/>
            <person name="Saville B.J."/>
            <person name="Banuett F."/>
            <person name="Kronstad J.W."/>
            <person name="Gold S.E."/>
            <person name="Mueller O."/>
            <person name="Perlin M.H."/>
            <person name="Woesten H.A.B."/>
            <person name="de Vries R."/>
            <person name="Ruiz-Herrera J."/>
            <person name="Reynaga-Pena C.G."/>
            <person name="Snetselaar K."/>
            <person name="McCann M."/>
            <person name="Perez-Martin J."/>
            <person name="Feldbruegge M."/>
            <person name="Basse C.W."/>
            <person name="Steinberg G."/>
            <person name="Ibeas J.I."/>
            <person name="Holloman W."/>
            <person name="Guzman P."/>
            <person name="Farman M.L."/>
            <person name="Stajich J.E."/>
            <person name="Sentandreu R."/>
            <person name="Gonzalez-Prieto J.M."/>
            <person name="Kennell J.C."/>
            <person name="Molina L."/>
            <person name="Schirawski J."/>
            <person name="Mendoza-Mendoza A."/>
            <person name="Greilinger D."/>
            <person name="Muench K."/>
            <person name="Roessel N."/>
            <person name="Scherer M."/>
            <person name="Vranes M."/>
            <person name="Ladendorf O."/>
            <person name="Vincon V."/>
            <person name="Fuchs U."/>
            <person name="Sandrock B."/>
            <person name="Meng S."/>
            <person name="Ho E.C.H."/>
            <person name="Cahill M.J."/>
            <person name="Boyce K.J."/>
            <person name="Klose J."/>
            <person name="Klosterman S.J."/>
            <person name="Deelstra H.J."/>
            <person name="Ortiz-Castellanos L."/>
            <person name="Li W."/>
            <person name="Sanchez-Alonso P."/>
            <person name="Schreier P.H."/>
            <person name="Haeuser-Hahn I."/>
            <person name="Vaupel M."/>
            <person name="Koopmann E."/>
            <person name="Friedrich G."/>
            <person name="Voss H."/>
            <person name="Schlueter T."/>
            <person name="Margolis J."/>
            <person name="Platt D."/>
            <person name="Swimmer C."/>
            <person name="Gnirke A."/>
            <person name="Chen F."/>
            <person name="Vysotskaia V."/>
            <person name="Mannhaupt G."/>
            <person name="Gueldener U."/>
            <person name="Muensterkoetter M."/>
            <person name="Haase D."/>
            <person name="Oesterheld M."/>
            <person name="Mewes H.-W."/>
            <person name="Mauceli E.W."/>
            <person name="DeCaprio D."/>
            <person name="Wade C.M."/>
            <person name="Butler J."/>
            <person name="Young S.K."/>
            <person name="Jaffe D.B."/>
            <person name="Calvo S.E."/>
            <person name="Nusbaum C."/>
            <person name="Galagan J.E."/>
            <person name="Birren B.W."/>
        </authorList>
    </citation>
    <scope>NUCLEOTIDE SEQUENCE [LARGE SCALE GENOMIC DNA]</scope>
    <source>
        <strain>DSM 14603 / FGSC 9021 / UM521</strain>
    </source>
</reference>
<reference key="2">
    <citation type="submission" date="2014-09" db="EMBL/GenBank/DDBJ databases">
        <authorList>
            <person name="Gueldener U."/>
            <person name="Muensterkoetter M."/>
            <person name="Walter M.C."/>
            <person name="Mannhaupt G."/>
            <person name="Kahmann R."/>
        </authorList>
    </citation>
    <scope>GENOME REANNOTATION</scope>
    <source>
        <strain>DSM 14603 / FGSC 9021 / UM521</strain>
    </source>
</reference>
<accession>Q4PA45</accession>
<accession>A0A0D1DY68</accession>
<protein>
    <recommendedName>
        <fullName>Protein BCP1</fullName>
    </recommendedName>
</protein>
<keyword id="KW-0963">Cytoplasm</keyword>
<keyword id="KW-0539">Nucleus</keyword>
<keyword id="KW-0653">Protein transport</keyword>
<keyword id="KW-1185">Reference proteome</keyword>
<keyword id="KW-0813">Transport</keyword>
<comment type="function">
    <text evidence="1">Involved in nuclear export, actin cytoskeleton organization and vesicular transport.</text>
</comment>
<comment type="subcellular location">
    <subcellularLocation>
        <location evidence="2">Cytoplasm</location>
    </subcellularLocation>
    <subcellularLocation>
        <location evidence="2">Nucleus</location>
    </subcellularLocation>
</comment>
<comment type="similarity">
    <text evidence="4">Belongs to the BCP1 family.</text>
</comment>
<sequence length="335" mass="36569">MPTDTKRKAHDQEPTADSSDYDSDGSEEPDFINVDFDFRAPEEIDFQALKRLLQQLFYTHNTKLDLSSLADHVVKTSTTQGVGTTIKIVDDEDQDPYAFVSAITLSSEKKEGSEAANSLSKYLLEVTSKPSSKSVHDVIKSAASSTSTNAPVIAVLHERMVNMPPQVAPPLYKMLLEEVQASLVSTSATRPSHYLFFSRVFSADAFSDDEAMDEDDDDDDDEPSGLAGARKRKAKLARREAKKAGAKKDAPKSRTISDGMALAGSSDEELGLFHPEDIAISKFASNSLTYRFPPPPDASDSFEAPLFGRIALVPADKMDALLQQIETDLSMPAPQ</sequence>